<dbReference type="EMBL" id="U43810">
    <property type="protein sequence ID" value="AAC61664.1"/>
    <property type="molecule type" value="Genomic_DNA"/>
</dbReference>
<dbReference type="SMR" id="O87883"/>
<dbReference type="GO" id="GO:0032993">
    <property type="term" value="C:protein-DNA complex"/>
    <property type="evidence" value="ECO:0007669"/>
    <property type="project" value="TreeGrafter"/>
</dbReference>
<dbReference type="GO" id="GO:0003677">
    <property type="term" value="F:DNA binding"/>
    <property type="evidence" value="ECO:0007669"/>
    <property type="project" value="UniProtKB-KW"/>
</dbReference>
<dbReference type="GO" id="GO:0003700">
    <property type="term" value="F:DNA-binding transcription factor activity"/>
    <property type="evidence" value="ECO:0007669"/>
    <property type="project" value="InterPro"/>
</dbReference>
<dbReference type="FunFam" id="1.10.10.10:FF:000001">
    <property type="entry name" value="LysR family transcriptional regulator"/>
    <property type="match status" value="1"/>
</dbReference>
<dbReference type="Gene3D" id="3.40.190.10">
    <property type="entry name" value="Periplasmic binding protein-like II"/>
    <property type="match status" value="1"/>
</dbReference>
<dbReference type="Gene3D" id="1.10.10.10">
    <property type="entry name" value="Winged helix-like DNA-binding domain superfamily/Winged helix DNA-binding domain"/>
    <property type="match status" value="1"/>
</dbReference>
<dbReference type="InterPro" id="IPR005119">
    <property type="entry name" value="LysR_subst-bd"/>
</dbReference>
<dbReference type="InterPro" id="IPR000847">
    <property type="entry name" value="Tscrpt_reg_HTH_LysR"/>
</dbReference>
<dbReference type="InterPro" id="IPR036388">
    <property type="entry name" value="WH-like_DNA-bd_sf"/>
</dbReference>
<dbReference type="InterPro" id="IPR036390">
    <property type="entry name" value="WH_DNA-bd_sf"/>
</dbReference>
<dbReference type="PANTHER" id="PTHR30346:SF26">
    <property type="entry name" value="HYDROGEN PEROXIDE-INDUCIBLE GENES ACTIVATOR"/>
    <property type="match status" value="1"/>
</dbReference>
<dbReference type="PANTHER" id="PTHR30346">
    <property type="entry name" value="TRANSCRIPTIONAL DUAL REGULATOR HCAR-RELATED"/>
    <property type="match status" value="1"/>
</dbReference>
<dbReference type="Pfam" id="PF00126">
    <property type="entry name" value="HTH_1"/>
    <property type="match status" value="1"/>
</dbReference>
<dbReference type="Pfam" id="PF03466">
    <property type="entry name" value="LysR_substrate"/>
    <property type="match status" value="1"/>
</dbReference>
<dbReference type="PRINTS" id="PR00039">
    <property type="entry name" value="HTHLYSR"/>
</dbReference>
<dbReference type="SUPFAM" id="SSF53850">
    <property type="entry name" value="Periplasmic binding protein-like II"/>
    <property type="match status" value="1"/>
</dbReference>
<dbReference type="SUPFAM" id="SSF46785">
    <property type="entry name" value="Winged helix' DNA-binding domain"/>
    <property type="match status" value="1"/>
</dbReference>
<dbReference type="PROSITE" id="PS50931">
    <property type="entry name" value="HTH_LYSR"/>
    <property type="match status" value="1"/>
</dbReference>
<feature type="chain" id="PRO_0000105737" description="Probable hydrogen peroxide-inducible genes activator">
    <location>
        <begin position="1"/>
        <end position="189" status="greater than"/>
    </location>
</feature>
<feature type="domain" description="HTH lysR-type" evidence="2">
    <location>
        <begin position="8"/>
        <end position="65"/>
    </location>
</feature>
<feature type="DNA-binding region" description="H-T-H motif" evidence="2">
    <location>
        <begin position="25"/>
        <end position="44"/>
    </location>
</feature>
<feature type="non-terminal residue">
    <location>
        <position position="189"/>
    </location>
</feature>
<keyword id="KW-0010">Activator</keyword>
<keyword id="KW-0238">DNA-binding</keyword>
<keyword id="KW-0804">Transcription</keyword>
<keyword id="KW-0805">Transcription regulation</keyword>
<accession>O87883</accession>
<name>OXYR_MYCXE</name>
<organism>
    <name type="scientific">Mycobacterium xenopi</name>
    <dbReference type="NCBI Taxonomy" id="1789"/>
    <lineage>
        <taxon>Bacteria</taxon>
        <taxon>Bacillati</taxon>
        <taxon>Actinomycetota</taxon>
        <taxon>Actinomycetes</taxon>
        <taxon>Mycobacteriales</taxon>
        <taxon>Mycobacteriaceae</taxon>
        <taxon>Mycobacterium</taxon>
    </lineage>
</organism>
<sequence>MADKSYQPTLAGLRAFAAVAEKQHFGSAASALGVNQSTLSQALAGLESGLGVRLIERSTRRVFLTPEGRQLLPHARAVLEAVDAFTAAAAGASDPLQGSLRLGLIPTMAPYVLPTVLAGLAERLPALTLRVVEDQTERLLAALREGALDAALIALPAETSGLSAVPIYDEDFVLALPPGHPLSGKRRVP</sequence>
<proteinExistence type="inferred from homology"/>
<gene>
    <name type="primary">oxyR</name>
</gene>
<comment type="function">
    <text evidence="1">Required for the induction the katG gene for catalase. Involved in the response to hydrogen peroxide (By similarity).</text>
</comment>
<comment type="similarity">
    <text evidence="3">Belongs to the LysR transcriptional regulatory family.</text>
</comment>
<reference key="1">
    <citation type="journal article" date="1998" name="J. Bacteriol.">
        <title>Oxidative stress response and characterization of the oxyR-ahpC and furA-katG loci in Mycobacterium marinum.</title>
        <authorList>
            <person name="Pagan-Ramos E."/>
            <person name="Song J."/>
            <person name="McFalone M."/>
            <person name="Mudd M.H."/>
            <person name="Deretic V."/>
        </authorList>
    </citation>
    <scope>NUCLEOTIDE SEQUENCE [GENOMIC DNA]</scope>
    <source>
        <strain>ATCC 19250 / DSM 43995 / CIP 104035 / JCM 15661 / NCTC 10042 / TMC 1482</strain>
    </source>
</reference>
<evidence type="ECO:0000250" key="1"/>
<evidence type="ECO:0000255" key="2">
    <source>
        <dbReference type="PROSITE-ProRule" id="PRU00253"/>
    </source>
</evidence>
<evidence type="ECO:0000305" key="3"/>
<protein>
    <recommendedName>
        <fullName>Probable hydrogen peroxide-inducible genes activator</fullName>
    </recommendedName>
</protein>